<feature type="chain" id="PRO_0000413148" description="Inosine triphosphate pyrophosphatase">
    <location>
        <begin position="1"/>
        <end position="192"/>
    </location>
</feature>
<feature type="binding site" evidence="1">
    <location>
        <begin position="10"/>
        <end position="15"/>
    </location>
    <ligand>
        <name>ITP</name>
        <dbReference type="ChEBI" id="CHEBI:61402"/>
    </ligand>
</feature>
<feature type="binding site" evidence="1">
    <location>
        <position position="46"/>
    </location>
    <ligand>
        <name>Mg(2+)</name>
        <dbReference type="ChEBI" id="CHEBI:18420"/>
    </ligand>
</feature>
<feature type="binding site" evidence="1">
    <location>
        <position position="58"/>
    </location>
    <ligand>
        <name>ITP</name>
        <dbReference type="ChEBI" id="CHEBI:61402"/>
    </ligand>
</feature>
<feature type="binding site" evidence="1">
    <location>
        <begin position="74"/>
        <end position="75"/>
    </location>
    <ligand>
        <name>ITP</name>
        <dbReference type="ChEBI" id="CHEBI:61402"/>
    </ligand>
</feature>
<feature type="binding site" evidence="1">
    <location>
        <position position="91"/>
    </location>
    <ligand>
        <name>ITP</name>
        <dbReference type="ChEBI" id="CHEBI:61402"/>
    </ligand>
</feature>
<feature type="binding site" evidence="1">
    <location>
        <begin position="149"/>
        <end position="152"/>
    </location>
    <ligand>
        <name>ITP</name>
        <dbReference type="ChEBI" id="CHEBI:61402"/>
    </ligand>
</feature>
<feature type="binding site" evidence="1">
    <location>
        <position position="172"/>
    </location>
    <ligand>
        <name>ITP</name>
        <dbReference type="ChEBI" id="CHEBI:61402"/>
    </ligand>
</feature>
<feature type="binding site" evidence="1">
    <location>
        <begin position="177"/>
        <end position="178"/>
    </location>
    <ligand>
        <name>ITP</name>
        <dbReference type="ChEBI" id="CHEBI:61402"/>
    </ligand>
</feature>
<sequence>MGALKLVFVTGNANKLREVKKILSTDVSSEDSLKIEVDSKALDLPEVQGSTQDVAREKSRAAAKLIGGPCITEDTALCFKAMGGLPGPYIKWFLEKLGLDGLNKMLQGFSSTEATALCTFAYCEPGKEPILFEGATEGNIVPARGPTNFGWDPIFEVSGTGMTYAEMPAEQKNSLSHRSKALDKLRQHFSRR</sequence>
<organism>
    <name type="scientific">Puccinia graminis f. sp. tritici (strain CRL 75-36-700-3 / race SCCL)</name>
    <name type="common">Black stem rust fungus</name>
    <dbReference type="NCBI Taxonomy" id="418459"/>
    <lineage>
        <taxon>Eukaryota</taxon>
        <taxon>Fungi</taxon>
        <taxon>Dikarya</taxon>
        <taxon>Basidiomycota</taxon>
        <taxon>Pucciniomycotina</taxon>
        <taxon>Pucciniomycetes</taxon>
        <taxon>Pucciniales</taxon>
        <taxon>Pucciniaceae</taxon>
        <taxon>Puccinia</taxon>
    </lineage>
</organism>
<accession>E3KAB5</accession>
<name>ITPA_PUCGT</name>
<reference key="1">
    <citation type="journal article" date="2011" name="Proc. Natl. Acad. Sci. U.S.A.">
        <title>Obligate biotrophy features unraveled by the genomic analysis of rust fungi.</title>
        <authorList>
            <person name="Duplessis S."/>
            <person name="Cuomo C.A."/>
            <person name="Lin Y.-C."/>
            <person name="Aerts A."/>
            <person name="Tisserant E."/>
            <person name="Veneault-Fourrey C."/>
            <person name="Joly D.L."/>
            <person name="Hacquard S."/>
            <person name="Amselem J."/>
            <person name="Cantarel B.L."/>
            <person name="Chiu R."/>
            <person name="Coutinho P.M."/>
            <person name="Feau N."/>
            <person name="Field M."/>
            <person name="Frey P."/>
            <person name="Gelhaye E."/>
            <person name="Goldberg J."/>
            <person name="Grabherr M.G."/>
            <person name="Kodira C.D."/>
            <person name="Kohler A."/>
            <person name="Kuees U."/>
            <person name="Lindquist E.A."/>
            <person name="Lucas S.M."/>
            <person name="Mago R."/>
            <person name="Mauceli E."/>
            <person name="Morin E."/>
            <person name="Murat C."/>
            <person name="Pangilinan J.L."/>
            <person name="Park R."/>
            <person name="Pearson M."/>
            <person name="Quesneville H."/>
            <person name="Rouhier N."/>
            <person name="Sakthikumar S."/>
            <person name="Salamov A.A."/>
            <person name="Schmutz J."/>
            <person name="Selles B."/>
            <person name="Shapiro H."/>
            <person name="Tanguay P."/>
            <person name="Tuskan G.A."/>
            <person name="Henrissat B."/>
            <person name="Van de Peer Y."/>
            <person name="Rouze P."/>
            <person name="Ellis J.G."/>
            <person name="Dodds P.N."/>
            <person name="Schein J.E."/>
            <person name="Zhong S."/>
            <person name="Hamelin R.C."/>
            <person name="Grigoriev I.V."/>
            <person name="Szabo L.J."/>
            <person name="Martin F."/>
        </authorList>
    </citation>
    <scope>NUCLEOTIDE SEQUENCE [LARGE SCALE GENOMIC DNA]</scope>
    <source>
        <strain>CRL 75-36-700-3 / race SCCL</strain>
    </source>
</reference>
<reference key="2">
    <citation type="journal article" date="2017" name="G3 (Bethesda)">
        <title>Comparative analysis highlights variable genome content of wheat rusts and divergence of the mating loci.</title>
        <authorList>
            <person name="Cuomo C.A."/>
            <person name="Bakkeren G."/>
            <person name="Khalil H.B."/>
            <person name="Panwar V."/>
            <person name="Joly D."/>
            <person name="Linning R."/>
            <person name="Sakthikumar S."/>
            <person name="Song X."/>
            <person name="Adiconis X."/>
            <person name="Fan L."/>
            <person name="Goldberg J.M."/>
            <person name="Levin J.Z."/>
            <person name="Young S."/>
            <person name="Zeng Q."/>
            <person name="Anikster Y."/>
            <person name="Bruce M."/>
            <person name="Wang M."/>
            <person name="Yin C."/>
            <person name="McCallum B."/>
            <person name="Szabo L.J."/>
            <person name="Hulbert S."/>
            <person name="Chen X."/>
            <person name="Fellers J.P."/>
        </authorList>
    </citation>
    <scope>GENOME REANNOTATION</scope>
    <source>
        <strain>CRL 75-36-700-3 / race SCCL</strain>
    </source>
</reference>
<protein>
    <recommendedName>
        <fullName evidence="1">Inosine triphosphate pyrophosphatase</fullName>
        <shortName evidence="1">ITPase</shortName>
        <shortName evidence="1">Inosine triphosphatase</shortName>
        <ecNumber evidence="1">3.6.1.66</ecNumber>
    </recommendedName>
    <alternativeName>
        <fullName evidence="1">Non-canonical purine NTP pyrophosphatase</fullName>
    </alternativeName>
    <alternativeName>
        <fullName evidence="1">Non-standard purine NTP pyrophosphatase</fullName>
    </alternativeName>
    <alternativeName>
        <fullName evidence="1">Nucleoside-triphosphate diphosphatase</fullName>
    </alternativeName>
    <alternativeName>
        <fullName evidence="1">Nucleoside-triphosphate pyrophosphatase</fullName>
        <shortName evidence="1">NTPase</shortName>
    </alternativeName>
    <alternativeName>
        <fullName evidence="1">XTP/dITP diphosphatase</fullName>
    </alternativeName>
</protein>
<evidence type="ECO:0000255" key="1">
    <source>
        <dbReference type="HAMAP-Rule" id="MF_03148"/>
    </source>
</evidence>
<proteinExistence type="inferred from homology"/>
<comment type="function">
    <text evidence="1">Pyrophosphatase that hydrolyzes non-canonical purine nucleotides such as inosine triphosphate (ITP), deoxyinosine triphosphate (dITP) or xanthosine 5'-triphosphate (XTP) to their respective monophosphate derivatives. The enzyme does not distinguish between the deoxy- and ribose forms. Probably excludes non-canonical purines from RNA and DNA precursor pools, thus preventing their incorporation into RNA and DNA and avoiding chromosomal lesions.</text>
</comment>
<comment type="catalytic activity">
    <reaction evidence="1">
        <text>ITP + H2O = IMP + diphosphate + H(+)</text>
        <dbReference type="Rhea" id="RHEA:29399"/>
        <dbReference type="ChEBI" id="CHEBI:15377"/>
        <dbReference type="ChEBI" id="CHEBI:15378"/>
        <dbReference type="ChEBI" id="CHEBI:33019"/>
        <dbReference type="ChEBI" id="CHEBI:58053"/>
        <dbReference type="ChEBI" id="CHEBI:61402"/>
        <dbReference type="EC" id="3.6.1.66"/>
    </reaction>
    <physiologicalReaction direction="left-to-right" evidence="1">
        <dbReference type="Rhea" id="RHEA:29400"/>
    </physiologicalReaction>
</comment>
<comment type="catalytic activity">
    <reaction evidence="1">
        <text>dITP + H2O = dIMP + diphosphate + H(+)</text>
        <dbReference type="Rhea" id="RHEA:28342"/>
        <dbReference type="ChEBI" id="CHEBI:15377"/>
        <dbReference type="ChEBI" id="CHEBI:15378"/>
        <dbReference type="ChEBI" id="CHEBI:33019"/>
        <dbReference type="ChEBI" id="CHEBI:61194"/>
        <dbReference type="ChEBI" id="CHEBI:61382"/>
        <dbReference type="EC" id="3.6.1.66"/>
    </reaction>
    <physiologicalReaction direction="left-to-right" evidence="1">
        <dbReference type="Rhea" id="RHEA:28343"/>
    </physiologicalReaction>
</comment>
<comment type="catalytic activity">
    <reaction evidence="1">
        <text>XTP + H2O = XMP + diphosphate + H(+)</text>
        <dbReference type="Rhea" id="RHEA:28610"/>
        <dbReference type="ChEBI" id="CHEBI:15377"/>
        <dbReference type="ChEBI" id="CHEBI:15378"/>
        <dbReference type="ChEBI" id="CHEBI:33019"/>
        <dbReference type="ChEBI" id="CHEBI:57464"/>
        <dbReference type="ChEBI" id="CHEBI:61314"/>
        <dbReference type="EC" id="3.6.1.66"/>
    </reaction>
    <physiologicalReaction direction="left-to-right" evidence="1">
        <dbReference type="Rhea" id="RHEA:28611"/>
    </physiologicalReaction>
</comment>
<comment type="cofactor">
    <cofactor evidence="1">
        <name>Mg(2+)</name>
        <dbReference type="ChEBI" id="CHEBI:18420"/>
    </cofactor>
    <cofactor evidence="1">
        <name>Mn(2+)</name>
        <dbReference type="ChEBI" id="CHEBI:29035"/>
    </cofactor>
    <text evidence="1">Binds 1 divalent metal cation per subunit; can use either Mg(2+) or Mn(2+).</text>
</comment>
<comment type="subunit">
    <text evidence="1">Homodimer.</text>
</comment>
<comment type="subcellular location">
    <subcellularLocation>
        <location evidence="1">Cytoplasm</location>
    </subcellularLocation>
    <subcellularLocation>
        <location evidence="1">Nucleus</location>
    </subcellularLocation>
</comment>
<comment type="similarity">
    <text evidence="1">Belongs to the HAM1 NTPase family.</text>
</comment>
<gene>
    <name type="ORF">PGTG_06893</name>
</gene>
<keyword id="KW-0963">Cytoplasm</keyword>
<keyword id="KW-0378">Hydrolase</keyword>
<keyword id="KW-0460">Magnesium</keyword>
<keyword id="KW-0464">Manganese</keyword>
<keyword id="KW-0479">Metal-binding</keyword>
<keyword id="KW-0546">Nucleotide metabolism</keyword>
<keyword id="KW-0547">Nucleotide-binding</keyword>
<keyword id="KW-0539">Nucleus</keyword>
<keyword id="KW-1185">Reference proteome</keyword>
<dbReference type="EC" id="3.6.1.66" evidence="1"/>
<dbReference type="EMBL" id="DS178278">
    <property type="protein sequence ID" value="EFP81272.1"/>
    <property type="molecule type" value="Genomic_DNA"/>
</dbReference>
<dbReference type="RefSeq" id="XP_003325691.1">
    <property type="nucleotide sequence ID" value="XM_003325643.2"/>
</dbReference>
<dbReference type="SMR" id="E3KAB5"/>
<dbReference type="FunCoup" id="E3KAB5">
    <property type="interactions" value="565"/>
</dbReference>
<dbReference type="STRING" id="418459.E3KAB5"/>
<dbReference type="EnsemblFungi" id="EFP81272">
    <property type="protein sequence ID" value="EFP81272"/>
    <property type="gene ID" value="PGTG_06893"/>
</dbReference>
<dbReference type="GeneID" id="10536759"/>
<dbReference type="KEGG" id="pgr:PGTG_06893"/>
<dbReference type="VEuPathDB" id="FungiDB:PGTG_06893"/>
<dbReference type="HOGENOM" id="CLU_082080_1_1_1"/>
<dbReference type="InParanoid" id="E3KAB5"/>
<dbReference type="OMA" id="YDPIFQP"/>
<dbReference type="OrthoDB" id="6288734at2759"/>
<dbReference type="Proteomes" id="UP000008783">
    <property type="component" value="Unassembled WGS sequence"/>
</dbReference>
<dbReference type="GO" id="GO:0005737">
    <property type="term" value="C:cytoplasm"/>
    <property type="evidence" value="ECO:0000318"/>
    <property type="project" value="GO_Central"/>
</dbReference>
<dbReference type="GO" id="GO:0005634">
    <property type="term" value="C:nucleus"/>
    <property type="evidence" value="ECO:0007669"/>
    <property type="project" value="UniProtKB-SubCell"/>
</dbReference>
<dbReference type="GO" id="GO:0035870">
    <property type="term" value="F:dITP diphosphatase activity"/>
    <property type="evidence" value="ECO:0007669"/>
    <property type="project" value="RHEA"/>
</dbReference>
<dbReference type="GO" id="GO:0036220">
    <property type="term" value="F:ITP diphosphatase activity"/>
    <property type="evidence" value="ECO:0007669"/>
    <property type="project" value="RHEA"/>
</dbReference>
<dbReference type="GO" id="GO:0046872">
    <property type="term" value="F:metal ion binding"/>
    <property type="evidence" value="ECO:0007669"/>
    <property type="project" value="UniProtKB-KW"/>
</dbReference>
<dbReference type="GO" id="GO:0047429">
    <property type="term" value="F:nucleoside triphosphate diphosphatase activity"/>
    <property type="evidence" value="ECO:0000318"/>
    <property type="project" value="GO_Central"/>
</dbReference>
<dbReference type="GO" id="GO:0000166">
    <property type="term" value="F:nucleotide binding"/>
    <property type="evidence" value="ECO:0007669"/>
    <property type="project" value="UniProtKB-KW"/>
</dbReference>
<dbReference type="GO" id="GO:0036222">
    <property type="term" value="F:XTP diphosphatase activity"/>
    <property type="evidence" value="ECO:0007669"/>
    <property type="project" value="RHEA"/>
</dbReference>
<dbReference type="GO" id="GO:0009204">
    <property type="term" value="P:deoxyribonucleoside triphosphate catabolic process"/>
    <property type="evidence" value="ECO:0007669"/>
    <property type="project" value="UniProtKB-UniRule"/>
</dbReference>
<dbReference type="GO" id="GO:0009143">
    <property type="term" value="P:nucleoside triphosphate catabolic process"/>
    <property type="evidence" value="ECO:0000318"/>
    <property type="project" value="GO_Central"/>
</dbReference>
<dbReference type="GO" id="GO:0009117">
    <property type="term" value="P:nucleotide metabolic process"/>
    <property type="evidence" value="ECO:0007669"/>
    <property type="project" value="UniProtKB-KW"/>
</dbReference>
<dbReference type="CDD" id="cd00515">
    <property type="entry name" value="HAM1"/>
    <property type="match status" value="1"/>
</dbReference>
<dbReference type="FunFam" id="3.90.950.10:FF:000003">
    <property type="entry name" value="Inosine triphosphate pyrophosphatase"/>
    <property type="match status" value="1"/>
</dbReference>
<dbReference type="Gene3D" id="3.90.950.10">
    <property type="match status" value="1"/>
</dbReference>
<dbReference type="HAMAP" id="MF_03148">
    <property type="entry name" value="HAM1_NTPase"/>
    <property type="match status" value="1"/>
</dbReference>
<dbReference type="InterPro" id="IPR027502">
    <property type="entry name" value="ITPase"/>
</dbReference>
<dbReference type="InterPro" id="IPR029001">
    <property type="entry name" value="ITPase-like_fam"/>
</dbReference>
<dbReference type="InterPro" id="IPR002637">
    <property type="entry name" value="RdgB/HAM1"/>
</dbReference>
<dbReference type="NCBIfam" id="TIGR00042">
    <property type="entry name" value="RdgB/HAM1 family non-canonical purine NTP pyrophosphatase"/>
    <property type="match status" value="1"/>
</dbReference>
<dbReference type="PANTHER" id="PTHR11067:SF9">
    <property type="entry name" value="INOSINE TRIPHOSPHATE PYROPHOSPHATASE"/>
    <property type="match status" value="1"/>
</dbReference>
<dbReference type="PANTHER" id="PTHR11067">
    <property type="entry name" value="INOSINE TRIPHOSPHATE PYROPHOSPHATASE/HAM1 PROTEIN"/>
    <property type="match status" value="1"/>
</dbReference>
<dbReference type="Pfam" id="PF01725">
    <property type="entry name" value="Ham1p_like"/>
    <property type="match status" value="1"/>
</dbReference>
<dbReference type="SUPFAM" id="SSF52972">
    <property type="entry name" value="ITPase-like"/>
    <property type="match status" value="1"/>
</dbReference>